<accession>Q822B4</accession>
<gene>
    <name evidence="1" type="primary">rplT</name>
    <name type="ordered locus">CCA_00769</name>
</gene>
<dbReference type="EMBL" id="AE015925">
    <property type="protein sequence ID" value="AAP05510.1"/>
    <property type="molecule type" value="Genomic_DNA"/>
</dbReference>
<dbReference type="RefSeq" id="WP_011006724.1">
    <property type="nucleotide sequence ID" value="NC_003361.3"/>
</dbReference>
<dbReference type="SMR" id="Q822B4"/>
<dbReference type="STRING" id="227941.CCA_00769"/>
<dbReference type="KEGG" id="cca:CCA_00769"/>
<dbReference type="eggNOG" id="COG0292">
    <property type="taxonomic scope" value="Bacteria"/>
</dbReference>
<dbReference type="HOGENOM" id="CLU_123265_0_1_0"/>
<dbReference type="OrthoDB" id="9808966at2"/>
<dbReference type="Proteomes" id="UP000002193">
    <property type="component" value="Chromosome"/>
</dbReference>
<dbReference type="GO" id="GO:1990904">
    <property type="term" value="C:ribonucleoprotein complex"/>
    <property type="evidence" value="ECO:0007669"/>
    <property type="project" value="UniProtKB-KW"/>
</dbReference>
<dbReference type="GO" id="GO:0005840">
    <property type="term" value="C:ribosome"/>
    <property type="evidence" value="ECO:0007669"/>
    <property type="project" value="UniProtKB-KW"/>
</dbReference>
<dbReference type="GO" id="GO:0019843">
    <property type="term" value="F:rRNA binding"/>
    <property type="evidence" value="ECO:0007669"/>
    <property type="project" value="UniProtKB-UniRule"/>
</dbReference>
<dbReference type="GO" id="GO:0003735">
    <property type="term" value="F:structural constituent of ribosome"/>
    <property type="evidence" value="ECO:0007669"/>
    <property type="project" value="InterPro"/>
</dbReference>
<dbReference type="GO" id="GO:0000027">
    <property type="term" value="P:ribosomal large subunit assembly"/>
    <property type="evidence" value="ECO:0007669"/>
    <property type="project" value="UniProtKB-UniRule"/>
</dbReference>
<dbReference type="GO" id="GO:0006412">
    <property type="term" value="P:translation"/>
    <property type="evidence" value="ECO:0007669"/>
    <property type="project" value="InterPro"/>
</dbReference>
<dbReference type="CDD" id="cd07026">
    <property type="entry name" value="Ribosomal_L20"/>
    <property type="match status" value="1"/>
</dbReference>
<dbReference type="FunFam" id="1.10.1900.20:FF:000001">
    <property type="entry name" value="50S ribosomal protein L20"/>
    <property type="match status" value="1"/>
</dbReference>
<dbReference type="Gene3D" id="6.10.160.10">
    <property type="match status" value="1"/>
</dbReference>
<dbReference type="Gene3D" id="1.10.1900.20">
    <property type="entry name" value="Ribosomal protein L20"/>
    <property type="match status" value="1"/>
</dbReference>
<dbReference type="HAMAP" id="MF_00382">
    <property type="entry name" value="Ribosomal_bL20"/>
    <property type="match status" value="1"/>
</dbReference>
<dbReference type="InterPro" id="IPR005813">
    <property type="entry name" value="Ribosomal_bL20"/>
</dbReference>
<dbReference type="InterPro" id="IPR049946">
    <property type="entry name" value="RIBOSOMAL_L20_CS"/>
</dbReference>
<dbReference type="InterPro" id="IPR035566">
    <property type="entry name" value="Ribosomal_protein_bL20_C"/>
</dbReference>
<dbReference type="NCBIfam" id="TIGR01032">
    <property type="entry name" value="rplT_bact"/>
    <property type="match status" value="1"/>
</dbReference>
<dbReference type="PANTHER" id="PTHR10986">
    <property type="entry name" value="39S RIBOSOMAL PROTEIN L20"/>
    <property type="match status" value="1"/>
</dbReference>
<dbReference type="Pfam" id="PF00453">
    <property type="entry name" value="Ribosomal_L20"/>
    <property type="match status" value="1"/>
</dbReference>
<dbReference type="PRINTS" id="PR00062">
    <property type="entry name" value="RIBOSOMALL20"/>
</dbReference>
<dbReference type="SUPFAM" id="SSF74731">
    <property type="entry name" value="Ribosomal protein L20"/>
    <property type="match status" value="1"/>
</dbReference>
<dbReference type="PROSITE" id="PS00937">
    <property type="entry name" value="RIBOSOMAL_L20"/>
    <property type="match status" value="1"/>
</dbReference>
<evidence type="ECO:0000255" key="1">
    <source>
        <dbReference type="HAMAP-Rule" id="MF_00382"/>
    </source>
</evidence>
<evidence type="ECO:0000305" key="2"/>
<reference key="1">
    <citation type="journal article" date="2003" name="Nucleic Acids Res.">
        <title>Genome sequence of Chlamydophila caviae (Chlamydia psittaci GPIC): examining the role of niche-specific genes in the evolution of the Chlamydiaceae.</title>
        <authorList>
            <person name="Read T.D."/>
            <person name="Myers G.S.A."/>
            <person name="Brunham R.C."/>
            <person name="Nelson W.C."/>
            <person name="Paulsen I.T."/>
            <person name="Heidelberg J.F."/>
            <person name="Holtzapple E.K."/>
            <person name="Khouri H.M."/>
            <person name="Federova N.B."/>
            <person name="Carty H.A."/>
            <person name="Umayam L.A."/>
            <person name="Haft D.H."/>
            <person name="Peterson J.D."/>
            <person name="Beanan M.J."/>
            <person name="White O."/>
            <person name="Salzberg S.L."/>
            <person name="Hsia R.-C."/>
            <person name="McClarty G."/>
            <person name="Rank R.G."/>
            <person name="Bavoil P.M."/>
            <person name="Fraser C.M."/>
        </authorList>
    </citation>
    <scope>NUCLEOTIDE SEQUENCE [LARGE SCALE GENOMIC DNA]</scope>
    <source>
        <strain>ATCC VR-813 / DSM 19441 / 03DC25 / GPIC</strain>
    </source>
</reference>
<protein>
    <recommendedName>
        <fullName evidence="1">Large ribosomal subunit protein bL20</fullName>
    </recommendedName>
    <alternativeName>
        <fullName evidence="2">50S ribosomal protein L20</fullName>
    </alternativeName>
</protein>
<comment type="function">
    <text evidence="1">Binds directly to 23S ribosomal RNA and is necessary for the in vitro assembly process of the 50S ribosomal subunit. It is not involved in the protein synthesizing functions of that subunit.</text>
</comment>
<comment type="similarity">
    <text evidence="1">Belongs to the bacterial ribosomal protein bL20 family.</text>
</comment>
<proteinExistence type="inferred from homology"/>
<organism>
    <name type="scientific">Chlamydia caviae (strain ATCC VR-813 / DSM 19441 / 03DC25 / GPIC)</name>
    <name type="common">Chlamydophila caviae</name>
    <dbReference type="NCBI Taxonomy" id="227941"/>
    <lineage>
        <taxon>Bacteria</taxon>
        <taxon>Pseudomonadati</taxon>
        <taxon>Chlamydiota</taxon>
        <taxon>Chlamydiia</taxon>
        <taxon>Chlamydiales</taxon>
        <taxon>Chlamydiaceae</taxon>
        <taxon>Chlamydia/Chlamydophila group</taxon>
        <taxon>Chlamydia</taxon>
    </lineage>
</organism>
<name>RL20_CHLCV</name>
<sequence length="121" mass="13824">MVRATGSVASRRRRKRVLKQAKGFWGDRKGHFRQSRSSVMRAMAFNYMHRKDRKGDFRSLWIARLNVASRINGLSYSRLINGLKCAGIDLNRKMLSEMAIHNPMGFAEVANQAKKALEATI</sequence>
<feature type="chain" id="PRO_0000177140" description="Large ribosomal subunit protein bL20">
    <location>
        <begin position="1"/>
        <end position="121"/>
    </location>
</feature>
<keyword id="KW-0687">Ribonucleoprotein</keyword>
<keyword id="KW-0689">Ribosomal protein</keyword>
<keyword id="KW-0694">RNA-binding</keyword>
<keyword id="KW-0699">rRNA-binding</keyword>